<evidence type="ECO:0000255" key="1">
    <source>
        <dbReference type="HAMAP-Rule" id="MF_02105"/>
    </source>
</evidence>
<evidence type="ECO:0000269" key="2">
    <source>
    </source>
</evidence>
<accession>Q81GA5</accession>
<keyword id="KW-1185">Reference proteome</keyword>
<protein>
    <recommendedName>
        <fullName evidence="1">Lactate utilization protein A</fullName>
    </recommendedName>
</protein>
<feature type="chain" id="PRO_0000384036" description="Lactate utilization protein A">
    <location>
        <begin position="1"/>
        <end position="239"/>
    </location>
</feature>
<sequence>MKVTLFVTCLVDMFETNVGKATVEVLERLGCEIEFPEAQVCCGQPAYNSGHVEAAKEAMKHMIETFEDAEYIVTPSGSCATMFHEYPHVFKDDPKWAKRAQKVADKTYEFTQFIVDVLKVTDVGASLPGIATIHKSCHMTRMLGVKEAPGILLSNVKGLTVRDLPNVQNCCGFGGTFSVKMTPISEQMVDEKVDSVMETGADYLIGADCGCLLNIGGRIERLGKEVKVMHIAEVLNSRS</sequence>
<organism>
    <name type="scientific">Bacillus cereus (strain ATCC 14579 / DSM 31 / CCUG 7414 / JCM 2152 / NBRC 15305 / NCIMB 9373 / NCTC 2599 / NRRL B-3711)</name>
    <dbReference type="NCBI Taxonomy" id="226900"/>
    <lineage>
        <taxon>Bacteria</taxon>
        <taxon>Bacillati</taxon>
        <taxon>Bacillota</taxon>
        <taxon>Bacilli</taxon>
        <taxon>Bacillales</taxon>
        <taxon>Bacillaceae</taxon>
        <taxon>Bacillus</taxon>
        <taxon>Bacillus cereus group</taxon>
    </lineage>
</organism>
<name>LUTA_BACCR</name>
<proteinExistence type="inferred from homology"/>
<reference key="1">
    <citation type="journal article" date="2003" name="Nature">
        <title>Genome sequence of Bacillus cereus and comparative analysis with Bacillus anthracis.</title>
        <authorList>
            <person name="Ivanova N."/>
            <person name="Sorokin A."/>
            <person name="Anderson I."/>
            <person name="Galleron N."/>
            <person name="Candelon B."/>
            <person name="Kapatral V."/>
            <person name="Bhattacharyya A."/>
            <person name="Reznik G."/>
            <person name="Mikhailova N."/>
            <person name="Lapidus A."/>
            <person name="Chu L."/>
            <person name="Mazur M."/>
            <person name="Goltsman E."/>
            <person name="Larsen N."/>
            <person name="D'Souza M."/>
            <person name="Walunas T."/>
            <person name="Grechkin Y."/>
            <person name="Pusch G."/>
            <person name="Haselkorn R."/>
            <person name="Fonstein M."/>
            <person name="Ehrlich S.D."/>
            <person name="Overbeek R."/>
            <person name="Kyrpides N.C."/>
        </authorList>
    </citation>
    <scope>NUCLEOTIDE SEQUENCE [LARGE SCALE GENOMIC DNA]</scope>
    <source>
        <strain>ATCC 14579 / DSM 31 / CCUG 7414 / JCM 2152 / NBRC 15305 / NCIMB 9373 / NCTC 2599 / NRRL B-3711</strain>
    </source>
</reference>
<reference key="2">
    <citation type="journal article" date="2009" name="J. Bacteriol.">
        <title>A widely conserved gene cluster required for lactate utilization in Bacillus subtilis and its involvement in biofilm formation.</title>
        <authorList>
            <person name="Chai Y."/>
            <person name="Kolter R."/>
            <person name="Losick R."/>
        </authorList>
    </citation>
    <scope>FUNCTION BY COMPLEMENTATION OF B.SUBTILIS LUTABC OPERON</scope>
</reference>
<gene>
    <name evidence="1" type="primary">lutA</name>
    <name type="ordered locus">BC_1303</name>
</gene>
<dbReference type="EMBL" id="AE016877">
    <property type="protein sequence ID" value="AAP08286.1"/>
    <property type="molecule type" value="Genomic_DNA"/>
</dbReference>
<dbReference type="RefSeq" id="NP_831085.1">
    <property type="nucleotide sequence ID" value="NC_004722.1"/>
</dbReference>
<dbReference type="RefSeq" id="WP_000869148.1">
    <property type="nucleotide sequence ID" value="NZ_CP138336.1"/>
</dbReference>
<dbReference type="SMR" id="Q81GA5"/>
<dbReference type="STRING" id="226900.BC_1303"/>
<dbReference type="KEGG" id="bce:BC1303"/>
<dbReference type="PATRIC" id="fig|226900.8.peg.1276"/>
<dbReference type="HOGENOM" id="CLU_023081_1_0_9"/>
<dbReference type="OrthoDB" id="9770306at2"/>
<dbReference type="Proteomes" id="UP000001417">
    <property type="component" value="Chromosome"/>
</dbReference>
<dbReference type="GO" id="GO:0005829">
    <property type="term" value="C:cytosol"/>
    <property type="evidence" value="ECO:0000318"/>
    <property type="project" value="GO_Central"/>
</dbReference>
<dbReference type="GO" id="GO:0016491">
    <property type="term" value="F:oxidoreductase activity"/>
    <property type="evidence" value="ECO:0007669"/>
    <property type="project" value="UniProtKB-ARBA"/>
</dbReference>
<dbReference type="GO" id="GO:0006089">
    <property type="term" value="P:lactate metabolic process"/>
    <property type="evidence" value="ECO:0007669"/>
    <property type="project" value="UniProtKB-UniRule"/>
</dbReference>
<dbReference type="HAMAP" id="MF_02105">
    <property type="entry name" value="LutA"/>
    <property type="match status" value="1"/>
</dbReference>
<dbReference type="InterPro" id="IPR004017">
    <property type="entry name" value="Cys_rich_dom"/>
</dbReference>
<dbReference type="InterPro" id="IPR022822">
    <property type="entry name" value="LutA"/>
</dbReference>
<dbReference type="PANTHER" id="PTHR30296:SF0">
    <property type="entry name" value="LACTATE UTILIZATION PROTEIN A"/>
    <property type="match status" value="1"/>
</dbReference>
<dbReference type="PANTHER" id="PTHR30296">
    <property type="entry name" value="UNCHARACTERIZED PROTEIN YKGE"/>
    <property type="match status" value="1"/>
</dbReference>
<dbReference type="Pfam" id="PF02754">
    <property type="entry name" value="CCG"/>
    <property type="match status" value="2"/>
</dbReference>
<comment type="function">
    <text evidence="1 2">Is involved in L-lactate degradation and allows cells to grow with lactate as the sole carbon source.</text>
</comment>
<comment type="similarity">
    <text evidence="1">Belongs to the LutA/YkgE family.</text>
</comment>